<name>DDL_CAMJJ</name>
<gene>
    <name evidence="2" type="primary">ddl</name>
    <name type="ordered locus">CJJ81176_0819</name>
</gene>
<evidence type="ECO:0000250" key="1"/>
<evidence type="ECO:0000255" key="2">
    <source>
        <dbReference type="HAMAP-Rule" id="MF_00047"/>
    </source>
</evidence>
<feature type="chain" id="PRO_1000074767" description="D-alanine--D-alanine ligase">
    <location>
        <begin position="1"/>
        <end position="346"/>
    </location>
</feature>
<feature type="domain" description="ATP-grasp" evidence="2">
    <location>
        <begin position="133"/>
        <end position="327"/>
    </location>
</feature>
<feature type="binding site" evidence="2">
    <location>
        <begin position="159"/>
        <end position="211"/>
    </location>
    <ligand>
        <name>ATP</name>
        <dbReference type="ChEBI" id="CHEBI:30616"/>
    </ligand>
</feature>
<feature type="binding site" evidence="2">
    <location>
        <position position="284"/>
    </location>
    <ligand>
        <name>Mg(2+)</name>
        <dbReference type="ChEBI" id="CHEBI:18420"/>
        <label>1</label>
    </ligand>
</feature>
<feature type="binding site" evidence="2">
    <location>
        <position position="296"/>
    </location>
    <ligand>
        <name>Mg(2+)</name>
        <dbReference type="ChEBI" id="CHEBI:18420"/>
        <label>1</label>
    </ligand>
</feature>
<feature type="binding site" evidence="2">
    <location>
        <position position="296"/>
    </location>
    <ligand>
        <name>Mg(2+)</name>
        <dbReference type="ChEBI" id="CHEBI:18420"/>
        <label>2</label>
    </ligand>
</feature>
<feature type="binding site" evidence="2">
    <location>
        <position position="298"/>
    </location>
    <ligand>
        <name>Mg(2+)</name>
        <dbReference type="ChEBI" id="CHEBI:18420"/>
        <label>2</label>
    </ligand>
</feature>
<comment type="function">
    <text evidence="2">Cell wall formation.</text>
</comment>
<comment type="catalytic activity">
    <reaction evidence="2">
        <text>2 D-alanine + ATP = D-alanyl-D-alanine + ADP + phosphate + H(+)</text>
        <dbReference type="Rhea" id="RHEA:11224"/>
        <dbReference type="ChEBI" id="CHEBI:15378"/>
        <dbReference type="ChEBI" id="CHEBI:30616"/>
        <dbReference type="ChEBI" id="CHEBI:43474"/>
        <dbReference type="ChEBI" id="CHEBI:57416"/>
        <dbReference type="ChEBI" id="CHEBI:57822"/>
        <dbReference type="ChEBI" id="CHEBI:456216"/>
        <dbReference type="EC" id="6.3.2.4"/>
    </reaction>
</comment>
<comment type="cofactor">
    <cofactor evidence="1">
        <name>Mg(2+)</name>
        <dbReference type="ChEBI" id="CHEBI:18420"/>
    </cofactor>
    <cofactor evidence="1">
        <name>Mn(2+)</name>
        <dbReference type="ChEBI" id="CHEBI:29035"/>
    </cofactor>
    <text evidence="1">Binds 2 magnesium or manganese ions per subunit.</text>
</comment>
<comment type="pathway">
    <text evidence="2">Cell wall biogenesis; peptidoglycan biosynthesis.</text>
</comment>
<comment type="subcellular location">
    <subcellularLocation>
        <location evidence="2">Cytoplasm</location>
    </subcellularLocation>
</comment>
<comment type="similarity">
    <text evidence="2">Belongs to the D-alanine--D-alanine ligase family.</text>
</comment>
<keyword id="KW-0067">ATP-binding</keyword>
<keyword id="KW-0133">Cell shape</keyword>
<keyword id="KW-0961">Cell wall biogenesis/degradation</keyword>
<keyword id="KW-0963">Cytoplasm</keyword>
<keyword id="KW-0436">Ligase</keyword>
<keyword id="KW-0460">Magnesium</keyword>
<keyword id="KW-0464">Manganese</keyword>
<keyword id="KW-0479">Metal-binding</keyword>
<keyword id="KW-0547">Nucleotide-binding</keyword>
<keyword id="KW-0573">Peptidoglycan synthesis</keyword>
<organism>
    <name type="scientific">Campylobacter jejuni subsp. jejuni serotype O:23/36 (strain 81-176)</name>
    <dbReference type="NCBI Taxonomy" id="354242"/>
    <lineage>
        <taxon>Bacteria</taxon>
        <taxon>Pseudomonadati</taxon>
        <taxon>Campylobacterota</taxon>
        <taxon>Epsilonproteobacteria</taxon>
        <taxon>Campylobacterales</taxon>
        <taxon>Campylobacteraceae</taxon>
        <taxon>Campylobacter</taxon>
    </lineage>
</organism>
<sequence>MKFAILFGGNSYEHEISIVSAVVLKKVINQNLEFIFCDEERRFYHIPSEKMNSKTFSTKAYKKEKELFIKQGGFFSKGFLKENKLECECVINLIHGRDGEDGKIAALFEFYSIKFIGPRLEASVLSFNKELTKLYAKSVGVKTLDYTMVRKGQNSKEKLSFPCIIKPARLGSSIGISIVKDEKDLEYAKDVGFEFDNDLVVEEFKNNIKEYNLAGCMINDEFVFSIIEEPKKKEFLDFEQKYLSFSGHNELIEANLSEELKEKLKDSFKKIYNPLFKGALIRCDFFILDNEIYLNEINPNPGSLANYLFKDFSTTLNALADQISLEKMIKISYNFLHSINGQKGKL</sequence>
<protein>
    <recommendedName>
        <fullName evidence="2">D-alanine--D-alanine ligase</fullName>
        <ecNumber evidence="2">6.3.2.4</ecNumber>
    </recommendedName>
    <alternativeName>
        <fullName evidence="2">D-Ala-D-Ala ligase</fullName>
    </alternativeName>
    <alternativeName>
        <fullName evidence="2">D-alanylalanine synthetase</fullName>
    </alternativeName>
</protein>
<dbReference type="EC" id="6.3.2.4" evidence="2"/>
<dbReference type="EMBL" id="CP000538">
    <property type="protein sequence ID" value="EAQ72375.1"/>
    <property type="molecule type" value="Genomic_DNA"/>
</dbReference>
<dbReference type="RefSeq" id="WP_002869413.1">
    <property type="nucleotide sequence ID" value="NC_008787.1"/>
</dbReference>
<dbReference type="SMR" id="A1VZE6"/>
<dbReference type="KEGG" id="cjj:CJJ81176_0819"/>
<dbReference type="eggNOG" id="COG1181">
    <property type="taxonomic scope" value="Bacteria"/>
</dbReference>
<dbReference type="HOGENOM" id="CLU_039268_0_2_7"/>
<dbReference type="UniPathway" id="UPA00219"/>
<dbReference type="Proteomes" id="UP000000646">
    <property type="component" value="Chromosome"/>
</dbReference>
<dbReference type="GO" id="GO:0005737">
    <property type="term" value="C:cytoplasm"/>
    <property type="evidence" value="ECO:0007669"/>
    <property type="project" value="UniProtKB-SubCell"/>
</dbReference>
<dbReference type="GO" id="GO:0005524">
    <property type="term" value="F:ATP binding"/>
    <property type="evidence" value="ECO:0007669"/>
    <property type="project" value="UniProtKB-KW"/>
</dbReference>
<dbReference type="GO" id="GO:0008716">
    <property type="term" value="F:D-alanine-D-alanine ligase activity"/>
    <property type="evidence" value="ECO:0007669"/>
    <property type="project" value="UniProtKB-UniRule"/>
</dbReference>
<dbReference type="GO" id="GO:0046872">
    <property type="term" value="F:metal ion binding"/>
    <property type="evidence" value="ECO:0007669"/>
    <property type="project" value="UniProtKB-KW"/>
</dbReference>
<dbReference type="GO" id="GO:0071555">
    <property type="term" value="P:cell wall organization"/>
    <property type="evidence" value="ECO:0007669"/>
    <property type="project" value="UniProtKB-KW"/>
</dbReference>
<dbReference type="GO" id="GO:0009252">
    <property type="term" value="P:peptidoglycan biosynthetic process"/>
    <property type="evidence" value="ECO:0007669"/>
    <property type="project" value="UniProtKB-UniRule"/>
</dbReference>
<dbReference type="GO" id="GO:0008360">
    <property type="term" value="P:regulation of cell shape"/>
    <property type="evidence" value="ECO:0007669"/>
    <property type="project" value="UniProtKB-KW"/>
</dbReference>
<dbReference type="Gene3D" id="3.40.50.20">
    <property type="match status" value="1"/>
</dbReference>
<dbReference type="Gene3D" id="3.30.1490.20">
    <property type="entry name" value="ATP-grasp fold, A domain"/>
    <property type="match status" value="1"/>
</dbReference>
<dbReference type="Gene3D" id="3.30.470.20">
    <property type="entry name" value="ATP-grasp fold, B domain"/>
    <property type="match status" value="1"/>
</dbReference>
<dbReference type="HAMAP" id="MF_00047">
    <property type="entry name" value="Dala_Dala_lig"/>
    <property type="match status" value="1"/>
</dbReference>
<dbReference type="InterPro" id="IPR011761">
    <property type="entry name" value="ATP-grasp"/>
</dbReference>
<dbReference type="InterPro" id="IPR013815">
    <property type="entry name" value="ATP_grasp_subdomain_1"/>
</dbReference>
<dbReference type="InterPro" id="IPR000291">
    <property type="entry name" value="D-Ala_lig_Van_CS"/>
</dbReference>
<dbReference type="InterPro" id="IPR005905">
    <property type="entry name" value="D_ala_D_ala"/>
</dbReference>
<dbReference type="InterPro" id="IPR011095">
    <property type="entry name" value="Dala_Dala_lig_C"/>
</dbReference>
<dbReference type="InterPro" id="IPR011127">
    <property type="entry name" value="Dala_Dala_lig_N"/>
</dbReference>
<dbReference type="InterPro" id="IPR016185">
    <property type="entry name" value="PreATP-grasp_dom_sf"/>
</dbReference>
<dbReference type="NCBIfam" id="TIGR01205">
    <property type="entry name" value="D_ala_D_alaTIGR"/>
    <property type="match status" value="1"/>
</dbReference>
<dbReference type="NCBIfam" id="NF002527">
    <property type="entry name" value="PRK01966.1-3"/>
    <property type="match status" value="1"/>
</dbReference>
<dbReference type="PANTHER" id="PTHR23132">
    <property type="entry name" value="D-ALANINE--D-ALANINE LIGASE"/>
    <property type="match status" value="1"/>
</dbReference>
<dbReference type="PANTHER" id="PTHR23132:SF23">
    <property type="entry name" value="D-ALANINE--D-ALANINE LIGASE B"/>
    <property type="match status" value="1"/>
</dbReference>
<dbReference type="Pfam" id="PF07478">
    <property type="entry name" value="Dala_Dala_lig_C"/>
    <property type="match status" value="1"/>
</dbReference>
<dbReference type="Pfam" id="PF01820">
    <property type="entry name" value="Dala_Dala_lig_N"/>
    <property type="match status" value="1"/>
</dbReference>
<dbReference type="SUPFAM" id="SSF56059">
    <property type="entry name" value="Glutathione synthetase ATP-binding domain-like"/>
    <property type="match status" value="1"/>
</dbReference>
<dbReference type="SUPFAM" id="SSF52440">
    <property type="entry name" value="PreATP-grasp domain"/>
    <property type="match status" value="1"/>
</dbReference>
<dbReference type="PROSITE" id="PS50975">
    <property type="entry name" value="ATP_GRASP"/>
    <property type="match status" value="1"/>
</dbReference>
<dbReference type="PROSITE" id="PS00843">
    <property type="entry name" value="DALA_DALA_LIGASE_1"/>
    <property type="match status" value="1"/>
</dbReference>
<dbReference type="PROSITE" id="PS00844">
    <property type="entry name" value="DALA_DALA_LIGASE_2"/>
    <property type="match status" value="1"/>
</dbReference>
<reference key="1">
    <citation type="submission" date="2006-12" db="EMBL/GenBank/DDBJ databases">
        <authorList>
            <person name="Fouts D.E."/>
            <person name="Nelson K.E."/>
            <person name="Sebastian Y."/>
        </authorList>
    </citation>
    <scope>NUCLEOTIDE SEQUENCE [LARGE SCALE GENOMIC DNA]</scope>
    <source>
        <strain>81-176</strain>
    </source>
</reference>
<accession>A1VZE6</accession>
<proteinExistence type="inferred from homology"/>